<protein>
    <recommendedName>
        <fullName evidence="1">Oxygen-dependent choline dehydrogenase</fullName>
        <shortName evidence="1">CDH</shortName>
        <shortName evidence="1">CHD</shortName>
        <ecNumber evidence="1">1.1.99.1</ecNumber>
    </recommendedName>
    <alternativeName>
        <fullName evidence="1">Betaine aldehyde dehydrogenase</fullName>
        <shortName evidence="1">BADH</shortName>
        <ecNumber evidence="1">1.2.1.8</ecNumber>
    </alternativeName>
</protein>
<reference key="1">
    <citation type="submission" date="2007-09" db="EMBL/GenBank/DDBJ databases">
        <title>Complete sequence of chromosome of Serratia proteamaculans 568.</title>
        <authorList>
            <consortium name="US DOE Joint Genome Institute"/>
            <person name="Copeland A."/>
            <person name="Lucas S."/>
            <person name="Lapidus A."/>
            <person name="Barry K."/>
            <person name="Glavina del Rio T."/>
            <person name="Dalin E."/>
            <person name="Tice H."/>
            <person name="Pitluck S."/>
            <person name="Chain P."/>
            <person name="Malfatti S."/>
            <person name="Shin M."/>
            <person name="Vergez L."/>
            <person name="Schmutz J."/>
            <person name="Larimer F."/>
            <person name="Land M."/>
            <person name="Hauser L."/>
            <person name="Kyrpides N."/>
            <person name="Kim E."/>
            <person name="Taghavi S."/>
            <person name="Newman L."/>
            <person name="Vangronsveld J."/>
            <person name="van der Lelie D."/>
            <person name="Richardson P."/>
        </authorList>
    </citation>
    <scope>NUCLEOTIDE SEQUENCE [LARGE SCALE GENOMIC DNA]</scope>
    <source>
        <strain>568</strain>
    </source>
</reference>
<feature type="chain" id="PRO_1000062188" description="Oxygen-dependent choline dehydrogenase">
    <location>
        <begin position="1"/>
        <end position="555"/>
    </location>
</feature>
<feature type="region of interest" description="Disordered" evidence="2">
    <location>
        <begin position="180"/>
        <end position="202"/>
    </location>
</feature>
<feature type="active site" description="Proton acceptor" evidence="1">
    <location>
        <position position="473"/>
    </location>
</feature>
<feature type="binding site" evidence="1">
    <location>
        <begin position="4"/>
        <end position="33"/>
    </location>
    <ligand>
        <name>FAD</name>
        <dbReference type="ChEBI" id="CHEBI:57692"/>
    </ligand>
</feature>
<comment type="function">
    <text evidence="1">Involved in the biosynthesis of the osmoprotectant glycine betaine. Catalyzes the oxidation of choline to betaine aldehyde and betaine aldehyde to glycine betaine at the same rate.</text>
</comment>
<comment type="catalytic activity">
    <reaction evidence="1">
        <text>choline + A = betaine aldehyde + AH2</text>
        <dbReference type="Rhea" id="RHEA:17433"/>
        <dbReference type="ChEBI" id="CHEBI:13193"/>
        <dbReference type="ChEBI" id="CHEBI:15354"/>
        <dbReference type="ChEBI" id="CHEBI:15710"/>
        <dbReference type="ChEBI" id="CHEBI:17499"/>
        <dbReference type="EC" id="1.1.99.1"/>
    </reaction>
</comment>
<comment type="catalytic activity">
    <reaction evidence="1">
        <text>betaine aldehyde + NAD(+) + H2O = glycine betaine + NADH + 2 H(+)</text>
        <dbReference type="Rhea" id="RHEA:15305"/>
        <dbReference type="ChEBI" id="CHEBI:15377"/>
        <dbReference type="ChEBI" id="CHEBI:15378"/>
        <dbReference type="ChEBI" id="CHEBI:15710"/>
        <dbReference type="ChEBI" id="CHEBI:17750"/>
        <dbReference type="ChEBI" id="CHEBI:57540"/>
        <dbReference type="ChEBI" id="CHEBI:57945"/>
        <dbReference type="EC" id="1.2.1.8"/>
    </reaction>
</comment>
<comment type="cofactor">
    <cofactor evidence="1">
        <name>FAD</name>
        <dbReference type="ChEBI" id="CHEBI:57692"/>
    </cofactor>
</comment>
<comment type="pathway">
    <text evidence="1">Amine and polyamine biosynthesis; betaine biosynthesis via choline pathway; betaine aldehyde from choline (cytochrome c reductase route): step 1/1.</text>
</comment>
<comment type="similarity">
    <text evidence="1">Belongs to the GMC oxidoreductase family.</text>
</comment>
<keyword id="KW-0274">FAD</keyword>
<keyword id="KW-0285">Flavoprotein</keyword>
<keyword id="KW-0520">NAD</keyword>
<keyword id="KW-0560">Oxidoreductase</keyword>
<organism>
    <name type="scientific">Serratia proteamaculans (strain 568)</name>
    <dbReference type="NCBI Taxonomy" id="399741"/>
    <lineage>
        <taxon>Bacteria</taxon>
        <taxon>Pseudomonadati</taxon>
        <taxon>Pseudomonadota</taxon>
        <taxon>Gammaproteobacteria</taxon>
        <taxon>Enterobacterales</taxon>
        <taxon>Yersiniaceae</taxon>
        <taxon>Serratia</taxon>
    </lineage>
</organism>
<dbReference type="EC" id="1.1.99.1" evidence="1"/>
<dbReference type="EC" id="1.2.1.8" evidence="1"/>
<dbReference type="EMBL" id="CP000826">
    <property type="protein sequence ID" value="ABV40619.1"/>
    <property type="molecule type" value="Genomic_DNA"/>
</dbReference>
<dbReference type="SMR" id="A8GBX9"/>
<dbReference type="STRING" id="399741.Spro_1515"/>
<dbReference type="KEGG" id="spe:Spro_1515"/>
<dbReference type="eggNOG" id="COG2303">
    <property type="taxonomic scope" value="Bacteria"/>
</dbReference>
<dbReference type="HOGENOM" id="CLU_002865_7_1_6"/>
<dbReference type="OrthoDB" id="9785276at2"/>
<dbReference type="UniPathway" id="UPA00529">
    <property type="reaction ID" value="UER00385"/>
</dbReference>
<dbReference type="GO" id="GO:0016020">
    <property type="term" value="C:membrane"/>
    <property type="evidence" value="ECO:0007669"/>
    <property type="project" value="TreeGrafter"/>
</dbReference>
<dbReference type="GO" id="GO:0008802">
    <property type="term" value="F:betaine-aldehyde dehydrogenase (NAD+) activity"/>
    <property type="evidence" value="ECO:0007669"/>
    <property type="project" value="UniProtKB-EC"/>
</dbReference>
<dbReference type="GO" id="GO:0008812">
    <property type="term" value="F:choline dehydrogenase activity"/>
    <property type="evidence" value="ECO:0007669"/>
    <property type="project" value="UniProtKB-UniRule"/>
</dbReference>
<dbReference type="GO" id="GO:0050660">
    <property type="term" value="F:flavin adenine dinucleotide binding"/>
    <property type="evidence" value="ECO:0007669"/>
    <property type="project" value="InterPro"/>
</dbReference>
<dbReference type="GO" id="GO:0019285">
    <property type="term" value="P:glycine betaine biosynthetic process from choline"/>
    <property type="evidence" value="ECO:0007669"/>
    <property type="project" value="UniProtKB-UniRule"/>
</dbReference>
<dbReference type="Gene3D" id="3.50.50.60">
    <property type="entry name" value="FAD/NAD(P)-binding domain"/>
    <property type="match status" value="1"/>
</dbReference>
<dbReference type="Gene3D" id="3.30.560.10">
    <property type="entry name" value="Glucose Oxidase, domain 3"/>
    <property type="match status" value="1"/>
</dbReference>
<dbReference type="HAMAP" id="MF_00750">
    <property type="entry name" value="Choline_dehydrogen"/>
    <property type="match status" value="1"/>
</dbReference>
<dbReference type="InterPro" id="IPR011533">
    <property type="entry name" value="BetA"/>
</dbReference>
<dbReference type="InterPro" id="IPR036188">
    <property type="entry name" value="FAD/NAD-bd_sf"/>
</dbReference>
<dbReference type="InterPro" id="IPR012132">
    <property type="entry name" value="GMC_OxRdtase"/>
</dbReference>
<dbReference type="InterPro" id="IPR000172">
    <property type="entry name" value="GMC_OxRdtase_N"/>
</dbReference>
<dbReference type="InterPro" id="IPR007867">
    <property type="entry name" value="GMC_OxRtase_C"/>
</dbReference>
<dbReference type="NCBIfam" id="TIGR01810">
    <property type="entry name" value="betA"/>
    <property type="match status" value="1"/>
</dbReference>
<dbReference type="NCBIfam" id="NF002550">
    <property type="entry name" value="PRK02106.1"/>
    <property type="match status" value="1"/>
</dbReference>
<dbReference type="PANTHER" id="PTHR11552:SF147">
    <property type="entry name" value="CHOLINE DEHYDROGENASE, MITOCHONDRIAL"/>
    <property type="match status" value="1"/>
</dbReference>
<dbReference type="PANTHER" id="PTHR11552">
    <property type="entry name" value="GLUCOSE-METHANOL-CHOLINE GMC OXIDOREDUCTASE"/>
    <property type="match status" value="1"/>
</dbReference>
<dbReference type="Pfam" id="PF05199">
    <property type="entry name" value="GMC_oxred_C"/>
    <property type="match status" value="1"/>
</dbReference>
<dbReference type="Pfam" id="PF00732">
    <property type="entry name" value="GMC_oxred_N"/>
    <property type="match status" value="1"/>
</dbReference>
<dbReference type="PIRSF" id="PIRSF000137">
    <property type="entry name" value="Alcohol_oxidase"/>
    <property type="match status" value="1"/>
</dbReference>
<dbReference type="SUPFAM" id="SSF54373">
    <property type="entry name" value="FAD-linked reductases, C-terminal domain"/>
    <property type="match status" value="1"/>
</dbReference>
<dbReference type="SUPFAM" id="SSF51905">
    <property type="entry name" value="FAD/NAD(P)-binding domain"/>
    <property type="match status" value="1"/>
</dbReference>
<dbReference type="PROSITE" id="PS00623">
    <property type="entry name" value="GMC_OXRED_1"/>
    <property type="match status" value="1"/>
</dbReference>
<dbReference type="PROSITE" id="PS00624">
    <property type="entry name" value="GMC_OXRED_2"/>
    <property type="match status" value="1"/>
</dbReference>
<gene>
    <name evidence="1" type="primary">betA</name>
    <name type="ordered locus">Spro_1515</name>
</gene>
<accession>A8GBX9</accession>
<evidence type="ECO:0000255" key="1">
    <source>
        <dbReference type="HAMAP-Rule" id="MF_00750"/>
    </source>
</evidence>
<evidence type="ECO:0000256" key="2">
    <source>
        <dbReference type="SAM" id="MobiDB-lite"/>
    </source>
</evidence>
<name>BETA_SERP5</name>
<sequence>MEYDYIIIGAGSAGNVLATRLTEDADVSVLLLEAGGPDYRMDFRTQMPAALAFPLQGRRYNWAYETDPEPHMNNRRMECGRGKGLGGSSLINGMCYIRGNAMDFDNWAKAPGLEDWSYLDCLPYFRKAETRDIGPNDFHGGDGPVSVTTPKAGNNELFHAMVEAGVQAGYPRTEDLNGYQQEGFGPMDRTVTPKGRRASTARGYLDQARSRPNLKIVTHALTDRIRFDGKRAVGVDYLQGEAKDVTSARARREVLLCAGAIASPQILQRSGVGPAALLNRLDIDLVHELPGVGENLQDHLEMYLQYACKKPVSLYPALQWFNQPKIGAEWLFNGSGIGASNQFEAGGFIRSREEFAWPNIQYHFLPVAINYNGSNAVKEHGFQAHVGSMRSPSRGRVQVKSKDPRQHPSILFNYMATEQDWQEFRDAIRITREIMAQPALDEYRGREISPGPEVQTDEQLDAFVREHAETAFHPSCSCKMGEDEMAVVDGQGRVHGLEGLRVVDASIMPLIITGNLNATTIMIAEKIADRIRQRTPLPRSTAEYYVAGNAPARKQ</sequence>
<proteinExistence type="inferred from homology"/>